<dbReference type="EMBL" id="Z73959">
    <property type="protein sequence ID" value="CAA98187.1"/>
    <property type="molecule type" value="mRNA"/>
</dbReference>
<dbReference type="SMR" id="P54765"/>
<dbReference type="GO" id="GO:0005737">
    <property type="term" value="C:cytoplasm"/>
    <property type="evidence" value="ECO:0007669"/>
    <property type="project" value="TreeGrafter"/>
</dbReference>
<dbReference type="GO" id="GO:0005634">
    <property type="term" value="C:nucleus"/>
    <property type="evidence" value="ECO:0007669"/>
    <property type="project" value="UniProtKB-SubCell"/>
</dbReference>
<dbReference type="GO" id="GO:0005525">
    <property type="term" value="F:GTP binding"/>
    <property type="evidence" value="ECO:0007669"/>
    <property type="project" value="UniProtKB-KW"/>
</dbReference>
<dbReference type="GO" id="GO:0003924">
    <property type="term" value="F:GTPase activity"/>
    <property type="evidence" value="ECO:0007669"/>
    <property type="project" value="InterPro"/>
</dbReference>
<dbReference type="GO" id="GO:0006606">
    <property type="term" value="P:protein import into nucleus"/>
    <property type="evidence" value="ECO:0007669"/>
    <property type="project" value="TreeGrafter"/>
</dbReference>
<dbReference type="GO" id="GO:0000054">
    <property type="term" value="P:ribosomal subunit export from nucleus"/>
    <property type="evidence" value="ECO:0007669"/>
    <property type="project" value="TreeGrafter"/>
</dbReference>
<dbReference type="CDD" id="cd00877">
    <property type="entry name" value="Ran"/>
    <property type="match status" value="1"/>
</dbReference>
<dbReference type="FunFam" id="3.40.50.300:FF:000369">
    <property type="entry name" value="GTP-binding nuclear protein"/>
    <property type="match status" value="1"/>
</dbReference>
<dbReference type="Gene3D" id="3.40.50.300">
    <property type="entry name" value="P-loop containing nucleotide triphosphate hydrolases"/>
    <property type="match status" value="1"/>
</dbReference>
<dbReference type="InterPro" id="IPR027417">
    <property type="entry name" value="P-loop_NTPase"/>
</dbReference>
<dbReference type="InterPro" id="IPR002041">
    <property type="entry name" value="Ran_GTPase"/>
</dbReference>
<dbReference type="InterPro" id="IPR005225">
    <property type="entry name" value="Small_GTP-bd"/>
</dbReference>
<dbReference type="InterPro" id="IPR001806">
    <property type="entry name" value="Small_GTPase"/>
</dbReference>
<dbReference type="NCBIfam" id="TIGR00231">
    <property type="entry name" value="small_GTP"/>
    <property type="match status" value="1"/>
</dbReference>
<dbReference type="PANTHER" id="PTHR24071:SF33">
    <property type="entry name" value="GTP-BINDING NUCLEAR PROTEIN RAN-1"/>
    <property type="match status" value="1"/>
</dbReference>
<dbReference type="PANTHER" id="PTHR24071">
    <property type="entry name" value="RAN GTPASE"/>
    <property type="match status" value="1"/>
</dbReference>
<dbReference type="Pfam" id="PF00071">
    <property type="entry name" value="Ras"/>
    <property type="match status" value="1"/>
</dbReference>
<dbReference type="PRINTS" id="PR00627">
    <property type="entry name" value="GTPRANTC4"/>
</dbReference>
<dbReference type="SMART" id="SM00175">
    <property type="entry name" value="RAB"/>
    <property type="match status" value="1"/>
</dbReference>
<dbReference type="SMART" id="SM00176">
    <property type="entry name" value="RAN"/>
    <property type="match status" value="1"/>
</dbReference>
<dbReference type="SMART" id="SM00173">
    <property type="entry name" value="RAS"/>
    <property type="match status" value="1"/>
</dbReference>
<dbReference type="SMART" id="SM00174">
    <property type="entry name" value="RHO"/>
    <property type="match status" value="1"/>
</dbReference>
<dbReference type="SUPFAM" id="SSF52540">
    <property type="entry name" value="P-loop containing nucleoside triphosphate hydrolases"/>
    <property type="match status" value="1"/>
</dbReference>
<dbReference type="PROSITE" id="PS51418">
    <property type="entry name" value="RAN"/>
    <property type="match status" value="1"/>
</dbReference>
<accession>P54765</accession>
<keyword id="KW-0342">GTP-binding</keyword>
<keyword id="KW-0547">Nucleotide-binding</keyword>
<keyword id="KW-0539">Nucleus</keyword>
<keyword id="KW-0653">Protein transport</keyword>
<keyword id="KW-0813">Transport</keyword>
<gene>
    <name type="primary">RAN1A</name>
</gene>
<name>RAN1A_LOTJA</name>
<sequence length="209" mass="23787">NFKLVIVGDGGTGKTTFVKRHLTGEFEKKYEPTIGVEVHPLDFFTNCGKIRFYCWDTAGQEKFGGLRDGYYIHGQCAIIMFDVTARLTYKNVPTWHRDLCRVCENIPIVLCGNKVDVKNRQVKAKQVTFHRKKNLQYYEISAKSNYNFEKPFLYLARKLAGDPNLHFVESPALAPPEVQIDLAAQQQHEAELAQAASQPLPDDDDDAFD</sequence>
<comment type="function">
    <text evidence="1">GTP-binding protein involved in nucleocytoplasmic transport. Required for the import of protein into the nucleus and also for RNA export. Involved in chromatin condensation and control of cell cycle (By similarity).</text>
</comment>
<comment type="subunit">
    <text evidence="2">Found in a nuclear export complex with RanGTP, exportin and pre-miRNA (By similarity).</text>
</comment>
<comment type="subcellular location">
    <subcellularLocation>
        <location evidence="1">Nucleus</location>
    </subcellularLocation>
</comment>
<comment type="similarity">
    <text evidence="3 5">Belongs to the small GTPase superfamily. Ran family.</text>
</comment>
<reference key="1">
    <citation type="journal article" date="1997" name="Plant J.">
        <title>Identification of new protein species among 33 different small GTP-binding proteins encoded by cDNAs from Lotus japonicus, and expression of corresponding mRNAs in developing root nodules.</title>
        <authorList>
            <person name="Borg S."/>
            <person name="Brandstrup B."/>
            <person name="Jensen T.J."/>
            <person name="Poulsen C."/>
        </authorList>
    </citation>
    <scope>NUCLEOTIDE SEQUENCE [MRNA]</scope>
    <source>
        <strain>cv. Gifu / B-129</strain>
        <tissue>Root nodule</tissue>
    </source>
</reference>
<feature type="chain" id="PRO_0000208720" description="GTP-binding nuclear protein Ran1A">
    <location>
        <begin position="1" status="less than"/>
        <end position="209"/>
    </location>
</feature>
<feature type="domain" description="Small GTPase Ran-type" evidence="3">
    <location>
        <begin position="1"/>
        <end position="162"/>
    </location>
</feature>
<feature type="region of interest" description="Switch-I" evidence="3">
    <location>
        <begin position="28"/>
        <end position="36"/>
    </location>
</feature>
<feature type="region of interest" description="Switch-II" evidence="3">
    <location>
        <begin position="59"/>
        <end position="75"/>
    </location>
</feature>
<feature type="region of interest" description="Disordered" evidence="4">
    <location>
        <begin position="187"/>
        <end position="209"/>
    </location>
</feature>
<feature type="compositionally biased region" description="Low complexity" evidence="4">
    <location>
        <begin position="187"/>
        <end position="196"/>
    </location>
</feature>
<feature type="binding site" evidence="2">
    <location>
        <begin position="9"/>
        <end position="16"/>
    </location>
    <ligand>
        <name>GTP</name>
        <dbReference type="ChEBI" id="CHEBI:37565"/>
    </ligand>
</feature>
<feature type="binding site" evidence="2">
    <location>
        <position position="59"/>
    </location>
    <ligand>
        <name>GTP</name>
        <dbReference type="ChEBI" id="CHEBI:37565"/>
    </ligand>
</feature>
<feature type="binding site" evidence="2">
    <location>
        <begin position="113"/>
        <end position="116"/>
    </location>
    <ligand>
        <name>GTP</name>
        <dbReference type="ChEBI" id="CHEBI:37565"/>
    </ligand>
</feature>
<feature type="binding site" evidence="2">
    <location>
        <begin position="141"/>
        <end position="143"/>
    </location>
    <ligand>
        <name>GTP</name>
        <dbReference type="ChEBI" id="CHEBI:37565"/>
    </ligand>
</feature>
<feature type="non-terminal residue">
    <location>
        <position position="1"/>
    </location>
</feature>
<proteinExistence type="evidence at transcript level"/>
<evidence type="ECO:0000250" key="1"/>
<evidence type="ECO:0000250" key="2">
    <source>
        <dbReference type="UniProtKB" id="P62825"/>
    </source>
</evidence>
<evidence type="ECO:0000255" key="3">
    <source>
        <dbReference type="PROSITE-ProRule" id="PRU00752"/>
    </source>
</evidence>
<evidence type="ECO:0000256" key="4">
    <source>
        <dbReference type="SAM" id="MobiDB-lite"/>
    </source>
</evidence>
<evidence type="ECO:0000305" key="5"/>
<organism>
    <name type="scientific">Lotus japonicus</name>
    <name type="common">Lotus corniculatus var. japonicus</name>
    <dbReference type="NCBI Taxonomy" id="34305"/>
    <lineage>
        <taxon>Eukaryota</taxon>
        <taxon>Viridiplantae</taxon>
        <taxon>Streptophyta</taxon>
        <taxon>Embryophyta</taxon>
        <taxon>Tracheophyta</taxon>
        <taxon>Spermatophyta</taxon>
        <taxon>Magnoliopsida</taxon>
        <taxon>eudicotyledons</taxon>
        <taxon>Gunneridae</taxon>
        <taxon>Pentapetalae</taxon>
        <taxon>rosids</taxon>
        <taxon>fabids</taxon>
        <taxon>Fabales</taxon>
        <taxon>Fabaceae</taxon>
        <taxon>Papilionoideae</taxon>
        <taxon>50 kb inversion clade</taxon>
        <taxon>NPAAA clade</taxon>
        <taxon>Hologalegina</taxon>
        <taxon>robinioid clade</taxon>
        <taxon>Loteae</taxon>
        <taxon>Lotus</taxon>
    </lineage>
</organism>
<protein>
    <recommendedName>
        <fullName>GTP-binding nuclear protein Ran1A</fullName>
    </recommendedName>
</protein>